<comment type="function">
    <text evidence="1">Associates with the EF-Tu.GDP complex and induces the exchange of GDP to GTP. It remains bound to the aminoacyl-tRNA.EF-Tu.GTP complex up to the GTP hydrolysis stage on the ribosome.</text>
</comment>
<comment type="subcellular location">
    <subcellularLocation>
        <location evidence="1">Cytoplasm</location>
    </subcellularLocation>
</comment>
<comment type="similarity">
    <text evidence="1">Belongs to the EF-Ts family.</text>
</comment>
<accession>B1VG90</accession>
<name>EFTS_CORU7</name>
<evidence type="ECO:0000255" key="1">
    <source>
        <dbReference type="HAMAP-Rule" id="MF_00050"/>
    </source>
</evidence>
<organism>
    <name type="scientific">Corynebacterium urealyticum (strain ATCC 43042 / DSM 7109)</name>
    <dbReference type="NCBI Taxonomy" id="504474"/>
    <lineage>
        <taxon>Bacteria</taxon>
        <taxon>Bacillati</taxon>
        <taxon>Actinomycetota</taxon>
        <taxon>Actinomycetes</taxon>
        <taxon>Mycobacteriales</taxon>
        <taxon>Corynebacteriaceae</taxon>
        <taxon>Corynebacterium</taxon>
    </lineage>
</organism>
<reference key="1">
    <citation type="journal article" date="2008" name="J. Biotechnol.">
        <title>The lifestyle of Corynebacterium urealyticum derived from its complete genome sequence established by pyrosequencing.</title>
        <authorList>
            <person name="Tauch A."/>
            <person name="Trost E."/>
            <person name="Tilker A."/>
            <person name="Ludewig U."/>
            <person name="Schneiker S."/>
            <person name="Goesmann A."/>
            <person name="Arnold W."/>
            <person name="Bekel T."/>
            <person name="Brinkrolf K."/>
            <person name="Brune I."/>
            <person name="Goetker S."/>
            <person name="Kalinowski J."/>
            <person name="Kamp P.-B."/>
            <person name="Lobo F.P."/>
            <person name="Viehoever P."/>
            <person name="Weisshaar B."/>
            <person name="Soriano F."/>
            <person name="Droege M."/>
            <person name="Puehler A."/>
        </authorList>
    </citation>
    <scope>NUCLEOTIDE SEQUENCE [LARGE SCALE GENOMIC DNA]</scope>
    <source>
        <strain>ATCC 43042 / DSM 7109</strain>
    </source>
</reference>
<proteinExistence type="inferred from homology"/>
<keyword id="KW-0963">Cytoplasm</keyword>
<keyword id="KW-0251">Elongation factor</keyword>
<keyword id="KW-0648">Protein biosynthesis</keyword>
<keyword id="KW-1185">Reference proteome</keyword>
<protein>
    <recommendedName>
        <fullName evidence="1">Elongation factor Ts</fullName>
        <shortName evidence="1">EF-Ts</shortName>
    </recommendedName>
</protein>
<dbReference type="EMBL" id="AM942444">
    <property type="protein sequence ID" value="CAQ04779.1"/>
    <property type="molecule type" value="Genomic_DNA"/>
</dbReference>
<dbReference type="RefSeq" id="WP_012360068.1">
    <property type="nucleotide sequence ID" value="NC_010545.1"/>
</dbReference>
<dbReference type="SMR" id="B1VG90"/>
<dbReference type="STRING" id="504474.cu0819"/>
<dbReference type="GeneID" id="60603596"/>
<dbReference type="KEGG" id="cur:cu0819"/>
<dbReference type="eggNOG" id="COG0264">
    <property type="taxonomic scope" value="Bacteria"/>
</dbReference>
<dbReference type="HOGENOM" id="CLU_047155_0_0_11"/>
<dbReference type="Proteomes" id="UP000001727">
    <property type="component" value="Chromosome"/>
</dbReference>
<dbReference type="GO" id="GO:0005737">
    <property type="term" value="C:cytoplasm"/>
    <property type="evidence" value="ECO:0007669"/>
    <property type="project" value="UniProtKB-SubCell"/>
</dbReference>
<dbReference type="GO" id="GO:0003746">
    <property type="term" value="F:translation elongation factor activity"/>
    <property type="evidence" value="ECO:0007669"/>
    <property type="project" value="UniProtKB-UniRule"/>
</dbReference>
<dbReference type="CDD" id="cd14275">
    <property type="entry name" value="UBA_EF-Ts"/>
    <property type="match status" value="1"/>
</dbReference>
<dbReference type="FunFam" id="1.10.286.20:FF:000001">
    <property type="entry name" value="Elongation factor Ts"/>
    <property type="match status" value="1"/>
</dbReference>
<dbReference type="FunFam" id="1.10.8.10:FF:000001">
    <property type="entry name" value="Elongation factor Ts"/>
    <property type="match status" value="1"/>
</dbReference>
<dbReference type="Gene3D" id="1.10.286.20">
    <property type="match status" value="1"/>
</dbReference>
<dbReference type="Gene3D" id="1.10.8.10">
    <property type="entry name" value="DNA helicase RuvA subunit, C-terminal domain"/>
    <property type="match status" value="1"/>
</dbReference>
<dbReference type="Gene3D" id="3.30.479.20">
    <property type="entry name" value="Elongation factor Ts, dimerisation domain"/>
    <property type="match status" value="2"/>
</dbReference>
<dbReference type="HAMAP" id="MF_00050">
    <property type="entry name" value="EF_Ts"/>
    <property type="match status" value="1"/>
</dbReference>
<dbReference type="InterPro" id="IPR036402">
    <property type="entry name" value="EF-Ts_dimer_sf"/>
</dbReference>
<dbReference type="InterPro" id="IPR001816">
    <property type="entry name" value="Transl_elong_EFTs/EF1B"/>
</dbReference>
<dbReference type="InterPro" id="IPR014039">
    <property type="entry name" value="Transl_elong_EFTs/EF1B_dimer"/>
</dbReference>
<dbReference type="InterPro" id="IPR018101">
    <property type="entry name" value="Transl_elong_Ts_CS"/>
</dbReference>
<dbReference type="InterPro" id="IPR009060">
    <property type="entry name" value="UBA-like_sf"/>
</dbReference>
<dbReference type="NCBIfam" id="TIGR00116">
    <property type="entry name" value="tsf"/>
    <property type="match status" value="1"/>
</dbReference>
<dbReference type="PANTHER" id="PTHR11741">
    <property type="entry name" value="ELONGATION FACTOR TS"/>
    <property type="match status" value="1"/>
</dbReference>
<dbReference type="PANTHER" id="PTHR11741:SF0">
    <property type="entry name" value="ELONGATION FACTOR TS, MITOCHONDRIAL"/>
    <property type="match status" value="1"/>
</dbReference>
<dbReference type="Pfam" id="PF00889">
    <property type="entry name" value="EF_TS"/>
    <property type="match status" value="1"/>
</dbReference>
<dbReference type="SUPFAM" id="SSF54713">
    <property type="entry name" value="Elongation factor Ts (EF-Ts), dimerisation domain"/>
    <property type="match status" value="1"/>
</dbReference>
<dbReference type="SUPFAM" id="SSF46934">
    <property type="entry name" value="UBA-like"/>
    <property type="match status" value="1"/>
</dbReference>
<dbReference type="PROSITE" id="PS01126">
    <property type="entry name" value="EF_TS_1"/>
    <property type="match status" value="1"/>
</dbReference>
<dbReference type="PROSITE" id="PS01127">
    <property type="entry name" value="EF_TS_2"/>
    <property type="match status" value="1"/>
</dbReference>
<sequence>MANYTAADVKKLREMTGSGMMDCKKALVEAEGDFDKAIEILRIQGAKDVGKRAERSASEGLIAVSGNTMIEVNAETDFVAKNQEFIDFANKVAQAADAANANSREELEAVEVDGVKAVDALQELSAKIGEKLELKRAVTLEGDKVAVYLHQRSADLPPAVGVLVAYEGENEEAARAAAMQVAALKASFLSTDDIPAETVAKEREIAEATAREEGKPEKALPNIIEGRLKGYFKDVVLLEQPSVTESKKTVKQVMDEAGVKLTGFVRYELGQA</sequence>
<gene>
    <name evidence="1" type="primary">tsf</name>
    <name type="ordered locus">cu0819</name>
</gene>
<feature type="chain" id="PRO_1000116718" description="Elongation factor Ts">
    <location>
        <begin position="1"/>
        <end position="272"/>
    </location>
</feature>
<feature type="region of interest" description="Involved in Mg(2+) ion dislocation from EF-Tu" evidence="1">
    <location>
        <begin position="76"/>
        <end position="79"/>
    </location>
</feature>